<name>CSRA_ALTMD</name>
<sequence>MLILTRRVGETLMVGDDVTVTVLGVKGNQVRIGVNAPKEVSVHREEIYMRIQAEKGGQPGSAE</sequence>
<proteinExistence type="inferred from homology"/>
<keyword id="KW-0010">Activator</keyword>
<keyword id="KW-0963">Cytoplasm</keyword>
<keyword id="KW-0678">Repressor</keyword>
<keyword id="KW-0694">RNA-binding</keyword>
<keyword id="KW-0810">Translation regulation</keyword>
<feature type="chain" id="PRO_1000097478" description="Translational regulator CsrA">
    <location>
        <begin position="1"/>
        <end position="63"/>
    </location>
</feature>
<accession>B4RUJ5</accession>
<accession>F2G421</accession>
<reference key="1">
    <citation type="journal article" date="2008" name="ISME J.">
        <title>Comparative genomics of two ecotypes of the marine planktonic copiotroph Alteromonas macleodii suggests alternative lifestyles associated with different kinds of particulate organic matter.</title>
        <authorList>
            <person name="Ivars-Martinez E."/>
            <person name="Martin-Cuadrado A.-B."/>
            <person name="D'Auria G."/>
            <person name="Mira A."/>
            <person name="Ferriera S."/>
            <person name="Johnson J."/>
            <person name="Friedman R."/>
            <person name="Rodriguez-Valera F."/>
        </authorList>
    </citation>
    <scope>NUCLEOTIDE SEQUENCE [LARGE SCALE GENOMIC DNA]</scope>
    <source>
        <strain>DSM 17117 / CIP 110805 / LMG 28347 / Deep ecotype</strain>
    </source>
</reference>
<dbReference type="EMBL" id="CP001103">
    <property type="protein sequence ID" value="AEA97363.1"/>
    <property type="molecule type" value="Genomic_DNA"/>
</dbReference>
<dbReference type="RefSeq" id="WP_012517705.1">
    <property type="nucleotide sequence ID" value="NC_011138.3"/>
</dbReference>
<dbReference type="SMR" id="B4RUJ5"/>
<dbReference type="GeneID" id="56341582"/>
<dbReference type="KEGG" id="amc:MADE_1006105"/>
<dbReference type="HOGENOM" id="CLU_164837_2_1_6"/>
<dbReference type="Proteomes" id="UP000001870">
    <property type="component" value="Chromosome"/>
</dbReference>
<dbReference type="GO" id="GO:0005829">
    <property type="term" value="C:cytosol"/>
    <property type="evidence" value="ECO:0007669"/>
    <property type="project" value="TreeGrafter"/>
</dbReference>
<dbReference type="GO" id="GO:0048027">
    <property type="term" value="F:mRNA 5'-UTR binding"/>
    <property type="evidence" value="ECO:0007669"/>
    <property type="project" value="UniProtKB-UniRule"/>
</dbReference>
<dbReference type="GO" id="GO:0006402">
    <property type="term" value="P:mRNA catabolic process"/>
    <property type="evidence" value="ECO:0007669"/>
    <property type="project" value="InterPro"/>
</dbReference>
<dbReference type="GO" id="GO:0045947">
    <property type="term" value="P:negative regulation of translational initiation"/>
    <property type="evidence" value="ECO:0007669"/>
    <property type="project" value="UniProtKB-UniRule"/>
</dbReference>
<dbReference type="GO" id="GO:0045948">
    <property type="term" value="P:positive regulation of translational initiation"/>
    <property type="evidence" value="ECO:0007669"/>
    <property type="project" value="UniProtKB-UniRule"/>
</dbReference>
<dbReference type="GO" id="GO:0006109">
    <property type="term" value="P:regulation of carbohydrate metabolic process"/>
    <property type="evidence" value="ECO:0007669"/>
    <property type="project" value="UniProtKB-UniRule"/>
</dbReference>
<dbReference type="FunFam" id="2.60.40.4380:FF:000001">
    <property type="entry name" value="Translational regulator CsrA"/>
    <property type="match status" value="1"/>
</dbReference>
<dbReference type="Gene3D" id="2.60.40.4380">
    <property type="entry name" value="Translational regulator CsrA"/>
    <property type="match status" value="1"/>
</dbReference>
<dbReference type="HAMAP" id="MF_00167">
    <property type="entry name" value="CsrA"/>
    <property type="match status" value="1"/>
</dbReference>
<dbReference type="InterPro" id="IPR003751">
    <property type="entry name" value="CsrA"/>
</dbReference>
<dbReference type="InterPro" id="IPR036107">
    <property type="entry name" value="CsrA_sf"/>
</dbReference>
<dbReference type="NCBIfam" id="TIGR00202">
    <property type="entry name" value="csrA"/>
    <property type="match status" value="1"/>
</dbReference>
<dbReference type="NCBIfam" id="NF002469">
    <property type="entry name" value="PRK01712.1"/>
    <property type="match status" value="1"/>
</dbReference>
<dbReference type="PANTHER" id="PTHR34984">
    <property type="entry name" value="CARBON STORAGE REGULATOR"/>
    <property type="match status" value="1"/>
</dbReference>
<dbReference type="PANTHER" id="PTHR34984:SF1">
    <property type="entry name" value="CARBON STORAGE REGULATOR"/>
    <property type="match status" value="1"/>
</dbReference>
<dbReference type="Pfam" id="PF02599">
    <property type="entry name" value="CsrA"/>
    <property type="match status" value="1"/>
</dbReference>
<dbReference type="SUPFAM" id="SSF117130">
    <property type="entry name" value="CsrA-like"/>
    <property type="match status" value="1"/>
</dbReference>
<organism>
    <name type="scientific">Alteromonas mediterranea (strain DSM 17117 / CIP 110805 / LMG 28347 / Deep ecotype)</name>
    <dbReference type="NCBI Taxonomy" id="1774373"/>
    <lineage>
        <taxon>Bacteria</taxon>
        <taxon>Pseudomonadati</taxon>
        <taxon>Pseudomonadota</taxon>
        <taxon>Gammaproteobacteria</taxon>
        <taxon>Alteromonadales</taxon>
        <taxon>Alteromonadaceae</taxon>
        <taxon>Alteromonas/Salinimonas group</taxon>
        <taxon>Alteromonas</taxon>
    </lineage>
</organism>
<gene>
    <name evidence="1" type="primary">csrA</name>
    <name type="ordered locus">MADE_1006105</name>
</gene>
<protein>
    <recommendedName>
        <fullName evidence="1">Translational regulator CsrA</fullName>
    </recommendedName>
    <alternativeName>
        <fullName evidence="1">Carbon storage regulator</fullName>
    </alternativeName>
</protein>
<evidence type="ECO:0000255" key="1">
    <source>
        <dbReference type="HAMAP-Rule" id="MF_00167"/>
    </source>
</evidence>
<comment type="function">
    <text evidence="1">A key translational regulator that binds mRNA to regulate translation initiation and/or mRNA stability. Mediates global changes in gene expression, shifting from rapid growth to stress survival by linking envelope stress, the stringent response and the catabolite repression systems. Usually binds in the 5'-UTR; binding at or near the Shine-Dalgarno sequence prevents ribosome-binding, repressing translation, binding elsewhere in the 5'-UTR can activate translation and/or stabilize the mRNA. Its function is antagonized by small RNA(s).</text>
</comment>
<comment type="subunit">
    <text evidence="1">Homodimer; the beta-strands of each monomer intercalate to form a hydrophobic core, while the alpha-helices form wings that extend away from the core.</text>
</comment>
<comment type="subcellular location">
    <subcellularLocation>
        <location evidence="1">Cytoplasm</location>
    </subcellularLocation>
</comment>
<comment type="similarity">
    <text evidence="1">Belongs to the CsrA/RsmA family.</text>
</comment>